<accession>B8ZUA8</accession>
<comment type="function">
    <text evidence="1">Involved in the biosynthesis of isopentenyl diphosphate (IPP) and dimethylallyl diphosphate (DMAPP), two major building blocks of isoprenoid compounds. Catalyzes the conversion of 4-diphosphocytidyl-2-C-methyl-D-erythritol 2-phosphate (CDP-ME2P) to 2-C-methyl-D-erythritol 2,4-cyclodiphosphate (ME-CPP) with a corresponding release of cytidine 5-monophosphate (CMP).</text>
</comment>
<comment type="catalytic activity">
    <reaction evidence="1">
        <text>4-CDP-2-C-methyl-D-erythritol 2-phosphate = 2-C-methyl-D-erythritol 2,4-cyclic diphosphate + CMP</text>
        <dbReference type="Rhea" id="RHEA:23864"/>
        <dbReference type="ChEBI" id="CHEBI:57919"/>
        <dbReference type="ChEBI" id="CHEBI:58483"/>
        <dbReference type="ChEBI" id="CHEBI:60377"/>
        <dbReference type="EC" id="4.6.1.12"/>
    </reaction>
</comment>
<comment type="cofactor">
    <cofactor evidence="1">
        <name>a divalent metal cation</name>
        <dbReference type="ChEBI" id="CHEBI:60240"/>
    </cofactor>
    <text evidence="1">Binds 1 divalent metal cation per subunit.</text>
</comment>
<comment type="pathway">
    <text evidence="1">Isoprenoid biosynthesis; isopentenyl diphosphate biosynthesis via DXP pathway; isopentenyl diphosphate from 1-deoxy-D-xylulose 5-phosphate: step 4/6.</text>
</comment>
<comment type="subunit">
    <text evidence="1">Homotrimer.</text>
</comment>
<comment type="similarity">
    <text evidence="1">Belongs to the IspF family.</text>
</comment>
<name>ISPF_MYCLB</name>
<evidence type="ECO:0000255" key="1">
    <source>
        <dbReference type="HAMAP-Rule" id="MF_00107"/>
    </source>
</evidence>
<proteinExistence type="inferred from homology"/>
<keyword id="KW-0414">Isoprene biosynthesis</keyword>
<keyword id="KW-0456">Lyase</keyword>
<keyword id="KW-0479">Metal-binding</keyword>
<protein>
    <recommendedName>
        <fullName evidence="1">2-C-methyl-D-erythritol 2,4-cyclodiphosphate synthase</fullName>
        <shortName evidence="1">MECDP-synthase</shortName>
        <shortName evidence="1">MECPP-synthase</shortName>
        <shortName evidence="1">MECPS</shortName>
        <ecNumber evidence="1">4.6.1.12</ecNumber>
    </recommendedName>
</protein>
<organism>
    <name type="scientific">Mycobacterium leprae (strain Br4923)</name>
    <dbReference type="NCBI Taxonomy" id="561304"/>
    <lineage>
        <taxon>Bacteria</taxon>
        <taxon>Bacillati</taxon>
        <taxon>Actinomycetota</taxon>
        <taxon>Actinomycetes</taxon>
        <taxon>Mycobacteriales</taxon>
        <taxon>Mycobacteriaceae</taxon>
        <taxon>Mycobacterium</taxon>
    </lineage>
</organism>
<gene>
    <name evidence="1" type="primary">ispF</name>
    <name type="ordered locus">MLBr00322</name>
</gene>
<reference key="1">
    <citation type="journal article" date="2009" name="Nat. Genet.">
        <title>Comparative genomic and phylogeographic analysis of Mycobacterium leprae.</title>
        <authorList>
            <person name="Monot M."/>
            <person name="Honore N."/>
            <person name="Garnier T."/>
            <person name="Zidane N."/>
            <person name="Sherafi D."/>
            <person name="Paniz-Mondolfi A."/>
            <person name="Matsuoka M."/>
            <person name="Taylor G.M."/>
            <person name="Donoghue H.D."/>
            <person name="Bouwman A."/>
            <person name="Mays S."/>
            <person name="Watson C."/>
            <person name="Lockwood D."/>
            <person name="Khamispour A."/>
            <person name="Dowlati Y."/>
            <person name="Jianping S."/>
            <person name="Rea T.H."/>
            <person name="Vera-Cabrera L."/>
            <person name="Stefani M.M."/>
            <person name="Banu S."/>
            <person name="Macdonald M."/>
            <person name="Sapkota B.R."/>
            <person name="Spencer J.S."/>
            <person name="Thomas J."/>
            <person name="Harshman K."/>
            <person name="Singh P."/>
            <person name="Busso P."/>
            <person name="Gattiker A."/>
            <person name="Rougemont J."/>
            <person name="Brennan P.J."/>
            <person name="Cole S.T."/>
        </authorList>
    </citation>
    <scope>NUCLEOTIDE SEQUENCE [LARGE SCALE GENOMIC DNA]</scope>
    <source>
        <strain>Br4923</strain>
    </source>
</reference>
<dbReference type="EC" id="4.6.1.12" evidence="1"/>
<dbReference type="EMBL" id="FM211192">
    <property type="protein sequence ID" value="CAR70415.1"/>
    <property type="molecule type" value="Genomic_DNA"/>
</dbReference>
<dbReference type="SMR" id="B8ZUA8"/>
<dbReference type="KEGG" id="mlb:MLBr00322"/>
<dbReference type="HOGENOM" id="CLU_084630_1_0_11"/>
<dbReference type="UniPathway" id="UPA00056">
    <property type="reaction ID" value="UER00095"/>
</dbReference>
<dbReference type="Proteomes" id="UP000006900">
    <property type="component" value="Chromosome"/>
</dbReference>
<dbReference type="GO" id="GO:0008685">
    <property type="term" value="F:2-C-methyl-D-erythritol 2,4-cyclodiphosphate synthase activity"/>
    <property type="evidence" value="ECO:0007669"/>
    <property type="project" value="UniProtKB-UniRule"/>
</dbReference>
<dbReference type="GO" id="GO:0046872">
    <property type="term" value="F:metal ion binding"/>
    <property type="evidence" value="ECO:0007669"/>
    <property type="project" value="UniProtKB-KW"/>
</dbReference>
<dbReference type="GO" id="GO:0019288">
    <property type="term" value="P:isopentenyl diphosphate biosynthetic process, methylerythritol 4-phosphate pathway"/>
    <property type="evidence" value="ECO:0007669"/>
    <property type="project" value="UniProtKB-UniRule"/>
</dbReference>
<dbReference type="GO" id="GO:0016114">
    <property type="term" value="P:terpenoid biosynthetic process"/>
    <property type="evidence" value="ECO:0007669"/>
    <property type="project" value="InterPro"/>
</dbReference>
<dbReference type="CDD" id="cd00554">
    <property type="entry name" value="MECDP_synthase"/>
    <property type="match status" value="1"/>
</dbReference>
<dbReference type="FunFam" id="3.30.1330.50:FF:000003">
    <property type="entry name" value="2-C-methyl-D-erythritol 2,4-cyclodiphosphate synthase"/>
    <property type="match status" value="1"/>
</dbReference>
<dbReference type="Gene3D" id="3.30.1330.50">
    <property type="entry name" value="2-C-methyl-D-erythritol 2,4-cyclodiphosphate synthase"/>
    <property type="match status" value="1"/>
</dbReference>
<dbReference type="HAMAP" id="MF_00107">
    <property type="entry name" value="IspF"/>
    <property type="match status" value="1"/>
</dbReference>
<dbReference type="InterPro" id="IPR003526">
    <property type="entry name" value="MECDP_synthase"/>
</dbReference>
<dbReference type="InterPro" id="IPR020555">
    <property type="entry name" value="MECDP_synthase_CS"/>
</dbReference>
<dbReference type="InterPro" id="IPR036571">
    <property type="entry name" value="MECDP_synthase_sf"/>
</dbReference>
<dbReference type="NCBIfam" id="TIGR00151">
    <property type="entry name" value="ispF"/>
    <property type="match status" value="1"/>
</dbReference>
<dbReference type="PANTHER" id="PTHR43181">
    <property type="entry name" value="2-C-METHYL-D-ERYTHRITOL 2,4-CYCLODIPHOSPHATE SYNTHASE, CHLOROPLASTIC"/>
    <property type="match status" value="1"/>
</dbReference>
<dbReference type="PANTHER" id="PTHR43181:SF1">
    <property type="entry name" value="2-C-METHYL-D-ERYTHRITOL 2,4-CYCLODIPHOSPHATE SYNTHASE, CHLOROPLASTIC"/>
    <property type="match status" value="1"/>
</dbReference>
<dbReference type="Pfam" id="PF02542">
    <property type="entry name" value="YgbB"/>
    <property type="match status" value="1"/>
</dbReference>
<dbReference type="SUPFAM" id="SSF69765">
    <property type="entry name" value="IpsF-like"/>
    <property type="match status" value="1"/>
</dbReference>
<dbReference type="PROSITE" id="PS01350">
    <property type="entry name" value="ISPF"/>
    <property type="match status" value="1"/>
</dbReference>
<feature type="chain" id="PRO_1000190715" description="2-C-methyl-D-erythritol 2,4-cyclodiphosphate synthase">
    <location>
        <begin position="1"/>
        <end position="158"/>
    </location>
</feature>
<feature type="binding site" evidence="1">
    <location>
        <begin position="12"/>
        <end position="14"/>
    </location>
    <ligand>
        <name>4-CDP-2-C-methyl-D-erythritol 2-phosphate</name>
        <dbReference type="ChEBI" id="CHEBI:57919"/>
    </ligand>
</feature>
<feature type="binding site" evidence="1">
    <location>
        <position position="12"/>
    </location>
    <ligand>
        <name>a divalent metal cation</name>
        <dbReference type="ChEBI" id="CHEBI:60240"/>
    </ligand>
</feature>
<feature type="binding site" evidence="1">
    <location>
        <position position="14"/>
    </location>
    <ligand>
        <name>a divalent metal cation</name>
        <dbReference type="ChEBI" id="CHEBI:60240"/>
    </ligand>
</feature>
<feature type="binding site" evidence="1">
    <location>
        <begin position="38"/>
        <end position="39"/>
    </location>
    <ligand>
        <name>4-CDP-2-C-methyl-D-erythritol 2-phosphate</name>
        <dbReference type="ChEBI" id="CHEBI:57919"/>
    </ligand>
</feature>
<feature type="binding site" evidence="1">
    <location>
        <position position="46"/>
    </location>
    <ligand>
        <name>a divalent metal cation</name>
        <dbReference type="ChEBI" id="CHEBI:60240"/>
    </ligand>
</feature>
<feature type="binding site" evidence="1">
    <location>
        <begin position="60"/>
        <end position="62"/>
    </location>
    <ligand>
        <name>4-CDP-2-C-methyl-D-erythritol 2-phosphate</name>
        <dbReference type="ChEBI" id="CHEBI:57919"/>
    </ligand>
</feature>
<feature type="binding site" evidence="1">
    <location>
        <begin position="133"/>
        <end position="136"/>
    </location>
    <ligand>
        <name>4-CDP-2-C-methyl-D-erythritol 2-phosphate</name>
        <dbReference type="ChEBI" id="CHEBI:57919"/>
    </ligand>
</feature>
<feature type="binding site" evidence="1">
    <location>
        <position position="143"/>
    </location>
    <ligand>
        <name>4-CDP-2-C-methyl-D-erythritol 2-phosphate</name>
        <dbReference type="ChEBI" id="CHEBI:57919"/>
    </ligand>
</feature>
<feature type="site" description="Transition state stabilizer" evidence="1">
    <location>
        <position position="38"/>
    </location>
</feature>
<feature type="site" description="Transition state stabilizer" evidence="1">
    <location>
        <position position="134"/>
    </location>
</feature>
<sequence length="158" mass="16511">MSELPRVGLGFDVHVFEPGRPCWLVGLLFPDNDGCAGHSDGDVAVHALCDAVLSAAGQGDIGGLFAVGDPRWERVSGADMLRHVVELLLRHGYEVVNASVQVIGNRPKIGPRRTEAQRLLSALLRAPVSVAATTTEGLGLTGRGEGLSAIATALVVQV</sequence>